<sequence length="178" mass="20295">MKRALFPGRFQPPHWGHVYAVREILKEVDEVIITVGSAQFNYILKDPFTAGERIWMLREALREGGIDLSRVVIIPVPNVENNLEWLGRVKSLAPPFQIVYTGNPFVALLFKEAGYEVRQQPMFRREQLSSTRVRELILKGDPQWEELVPKSVAAIIKAIGGAERLRIAALGEAEPHKW</sequence>
<gene>
    <name type="ordered locus">PAE1438</name>
</gene>
<dbReference type="EC" id="2.7.7.1" evidence="1"/>
<dbReference type="EMBL" id="AE009441">
    <property type="protein sequence ID" value="AAL63487.1"/>
    <property type="molecule type" value="Genomic_DNA"/>
</dbReference>
<dbReference type="RefSeq" id="WP_011007960.1">
    <property type="nucleotide sequence ID" value="NC_003364.1"/>
</dbReference>
<dbReference type="SMR" id="Q8ZX62"/>
<dbReference type="FunCoup" id="Q8ZX62">
    <property type="interactions" value="6"/>
</dbReference>
<dbReference type="STRING" id="178306.PAE1438"/>
<dbReference type="EnsemblBacteria" id="AAL63487">
    <property type="protein sequence ID" value="AAL63487"/>
    <property type="gene ID" value="PAE1438"/>
</dbReference>
<dbReference type="GeneID" id="1465728"/>
<dbReference type="KEGG" id="pai:PAE1438"/>
<dbReference type="PATRIC" id="fig|178306.9.peg.1067"/>
<dbReference type="eggNOG" id="arCOG00972">
    <property type="taxonomic scope" value="Archaea"/>
</dbReference>
<dbReference type="HOGENOM" id="CLU_108783_0_0_2"/>
<dbReference type="InParanoid" id="Q8ZX62"/>
<dbReference type="UniPathway" id="UPA00253">
    <property type="reaction ID" value="UER00600"/>
</dbReference>
<dbReference type="Proteomes" id="UP000002439">
    <property type="component" value="Chromosome"/>
</dbReference>
<dbReference type="GO" id="GO:0005737">
    <property type="term" value="C:cytoplasm"/>
    <property type="evidence" value="ECO:0007669"/>
    <property type="project" value="UniProtKB-SubCell"/>
</dbReference>
<dbReference type="GO" id="GO:0005524">
    <property type="term" value="F:ATP binding"/>
    <property type="evidence" value="ECO:0007669"/>
    <property type="project" value="UniProtKB-KW"/>
</dbReference>
<dbReference type="GO" id="GO:0000309">
    <property type="term" value="F:nicotinamide-nucleotide adenylyltransferase activity"/>
    <property type="evidence" value="ECO:0007669"/>
    <property type="project" value="UniProtKB-UniRule"/>
</dbReference>
<dbReference type="GO" id="GO:0009435">
    <property type="term" value="P:NAD biosynthetic process"/>
    <property type="evidence" value="ECO:0007669"/>
    <property type="project" value="UniProtKB-UniRule"/>
</dbReference>
<dbReference type="CDD" id="cd02166">
    <property type="entry name" value="NMNAT_Archaea"/>
    <property type="match status" value="1"/>
</dbReference>
<dbReference type="Gene3D" id="3.40.50.620">
    <property type="entry name" value="HUPs"/>
    <property type="match status" value="1"/>
</dbReference>
<dbReference type="HAMAP" id="MF_00243">
    <property type="entry name" value="NMN_adenylyltr"/>
    <property type="match status" value="1"/>
</dbReference>
<dbReference type="InterPro" id="IPR004821">
    <property type="entry name" value="Cyt_trans-like"/>
</dbReference>
<dbReference type="InterPro" id="IPR006418">
    <property type="entry name" value="NMN_Atrans_arc"/>
</dbReference>
<dbReference type="InterPro" id="IPR014729">
    <property type="entry name" value="Rossmann-like_a/b/a_fold"/>
</dbReference>
<dbReference type="NCBIfam" id="TIGR01527">
    <property type="entry name" value="arch_NMN_Atrans"/>
    <property type="match status" value="1"/>
</dbReference>
<dbReference type="NCBIfam" id="TIGR00125">
    <property type="entry name" value="cyt_tran_rel"/>
    <property type="match status" value="1"/>
</dbReference>
<dbReference type="NCBIfam" id="NF002243">
    <property type="entry name" value="PRK01153.1"/>
    <property type="match status" value="1"/>
</dbReference>
<dbReference type="PANTHER" id="PTHR21342:SF0">
    <property type="entry name" value="BIFUNCTIONAL NMN ADENYLYLTRANSFERASE_NUDIX HYDROLASE"/>
    <property type="match status" value="1"/>
</dbReference>
<dbReference type="PANTHER" id="PTHR21342">
    <property type="entry name" value="PHOSPHOPANTETHEINE ADENYLYLTRANSFERASE"/>
    <property type="match status" value="1"/>
</dbReference>
<dbReference type="Pfam" id="PF01467">
    <property type="entry name" value="CTP_transf_like"/>
    <property type="match status" value="1"/>
</dbReference>
<dbReference type="SUPFAM" id="SSF52374">
    <property type="entry name" value="Nucleotidylyl transferase"/>
    <property type="match status" value="1"/>
</dbReference>
<organism>
    <name type="scientific">Pyrobaculum aerophilum (strain ATCC 51768 / DSM 7523 / JCM 9630 / CIP 104966 / NBRC 100827 / IM2)</name>
    <dbReference type="NCBI Taxonomy" id="178306"/>
    <lineage>
        <taxon>Archaea</taxon>
        <taxon>Thermoproteota</taxon>
        <taxon>Thermoprotei</taxon>
        <taxon>Thermoproteales</taxon>
        <taxon>Thermoproteaceae</taxon>
        <taxon>Pyrobaculum</taxon>
    </lineage>
</organism>
<comment type="catalytic activity">
    <reaction evidence="1">
        <text>beta-nicotinamide D-ribonucleotide + ATP + H(+) = diphosphate + NAD(+)</text>
        <dbReference type="Rhea" id="RHEA:21360"/>
        <dbReference type="ChEBI" id="CHEBI:14649"/>
        <dbReference type="ChEBI" id="CHEBI:15378"/>
        <dbReference type="ChEBI" id="CHEBI:30616"/>
        <dbReference type="ChEBI" id="CHEBI:33019"/>
        <dbReference type="ChEBI" id="CHEBI:57540"/>
        <dbReference type="EC" id="2.7.7.1"/>
    </reaction>
</comment>
<comment type="pathway">
    <text evidence="1">Cofactor biosynthesis; NAD(+) biosynthesis; NAD(+) from nicotinamide D-ribonucleotide: step 1/1.</text>
</comment>
<comment type="subcellular location">
    <subcellularLocation>
        <location evidence="1">Cytoplasm</location>
    </subcellularLocation>
</comment>
<comment type="similarity">
    <text evidence="1">Belongs to the archaeal NMN adenylyltransferase family.</text>
</comment>
<reference key="1">
    <citation type="journal article" date="2002" name="Proc. Natl. Acad. Sci. U.S.A.">
        <title>Genome sequence of the hyperthermophilic crenarchaeon Pyrobaculum aerophilum.</title>
        <authorList>
            <person name="Fitz-Gibbon S.T."/>
            <person name="Ladner H."/>
            <person name="Kim U.-J."/>
            <person name="Stetter K.O."/>
            <person name="Simon M.I."/>
            <person name="Miller J.H."/>
        </authorList>
    </citation>
    <scope>NUCLEOTIDE SEQUENCE [LARGE SCALE GENOMIC DNA]</scope>
    <source>
        <strain>ATCC 51768 / DSM 7523 / JCM 9630 / CIP 104966 / NBRC 100827 / IM2</strain>
    </source>
</reference>
<keyword id="KW-0067">ATP-binding</keyword>
<keyword id="KW-0963">Cytoplasm</keyword>
<keyword id="KW-0520">NAD</keyword>
<keyword id="KW-0547">Nucleotide-binding</keyword>
<keyword id="KW-0548">Nucleotidyltransferase</keyword>
<keyword id="KW-0662">Pyridine nucleotide biosynthesis</keyword>
<keyword id="KW-1185">Reference proteome</keyword>
<keyword id="KW-0808">Transferase</keyword>
<proteinExistence type="inferred from homology"/>
<name>NADM_PYRAE</name>
<protein>
    <recommendedName>
        <fullName evidence="1">Nicotinamide-nucleotide adenylyltransferase</fullName>
        <ecNumber evidence="1">2.7.7.1</ecNumber>
    </recommendedName>
    <alternativeName>
        <fullName evidence="1">NAD(+) diphosphorylase</fullName>
    </alternativeName>
    <alternativeName>
        <fullName evidence="1">NAD(+) pyrophosphorylase</fullName>
    </alternativeName>
    <alternativeName>
        <fullName evidence="1">NMN adenylyltransferase</fullName>
    </alternativeName>
</protein>
<feature type="chain" id="PRO_0000134999" description="Nicotinamide-nucleotide adenylyltransferase">
    <location>
        <begin position="1"/>
        <end position="178"/>
    </location>
</feature>
<accession>Q8ZX62</accession>
<evidence type="ECO:0000255" key="1">
    <source>
        <dbReference type="HAMAP-Rule" id="MF_00243"/>
    </source>
</evidence>